<reference key="1">
    <citation type="submission" date="2004-11" db="EMBL/GenBank/DDBJ databases">
        <title>Isolation and characterization of the cysteine dioxygenase gene (CDO1) from the dimorphic pathogenic fungus Histoplasma capsulatum.</title>
        <authorList>
            <person name="Hasler S."/>
            <person name="Shearer G. Jr."/>
        </authorList>
    </citation>
    <scope>NUCLEOTIDE SEQUENCE [MRNA]</scope>
</reference>
<reference key="2">
    <citation type="submission" date="2009-02" db="EMBL/GenBank/DDBJ databases">
        <title>The genome sequence of Ajellomyces capsulatus strain G186AR.</title>
        <authorList>
            <person name="Champion M."/>
            <person name="Cuomo C.A."/>
            <person name="Ma L.-J."/>
            <person name="Henn M.R."/>
            <person name="Sil A."/>
            <person name="Goldman B."/>
            <person name="Young S.K."/>
            <person name="Kodira C.D."/>
            <person name="Zeng Q."/>
            <person name="Koehrsen M."/>
            <person name="Alvarado L."/>
            <person name="Berlin A."/>
            <person name="Borenstein D."/>
            <person name="Chen Z."/>
            <person name="Engels R."/>
            <person name="Freedman E."/>
            <person name="Gellesch M."/>
            <person name="Goldberg J."/>
            <person name="Griggs A."/>
            <person name="Gujja S."/>
            <person name="Heiman D."/>
            <person name="Hepburn T."/>
            <person name="Howarth C."/>
            <person name="Jen D."/>
            <person name="Larson L."/>
            <person name="Lewis B."/>
            <person name="Mehta T."/>
            <person name="Park D."/>
            <person name="Pearson M."/>
            <person name="Roberts A."/>
            <person name="Saif S."/>
            <person name="Shea T."/>
            <person name="Shenoy N."/>
            <person name="Sisk P."/>
            <person name="Stolte C."/>
            <person name="Sykes S."/>
            <person name="Walk T."/>
            <person name="White J."/>
            <person name="Yandava C."/>
            <person name="Klein B."/>
            <person name="McEwen J.G."/>
            <person name="Puccia R."/>
            <person name="Goldman G.H."/>
            <person name="Felipe M.S."/>
            <person name="Nino-Vega G."/>
            <person name="San-Blas G."/>
            <person name="Taylor J."/>
            <person name="Mendoza L."/>
            <person name="Galagan J.E."/>
            <person name="Nusbaum C."/>
            <person name="Birren B.W."/>
        </authorList>
    </citation>
    <scope>NUCLEOTIDE SEQUENCE [LARGE SCALE GENOMIC DNA]</scope>
    <source>
        <strain>G186AR / H82 / ATCC MYA-2454 / RMSCC 2432</strain>
    </source>
</reference>
<organism>
    <name type="scientific">Ajellomyces capsulatus (strain G186AR / H82 / ATCC MYA-2454 / RMSCC 2432)</name>
    <name type="common">Darling's disease fungus</name>
    <name type="synonym">Histoplasma capsulatum</name>
    <dbReference type="NCBI Taxonomy" id="447093"/>
    <lineage>
        <taxon>Eukaryota</taxon>
        <taxon>Fungi</taxon>
        <taxon>Dikarya</taxon>
        <taxon>Ascomycota</taxon>
        <taxon>Pezizomycotina</taxon>
        <taxon>Eurotiomycetes</taxon>
        <taxon>Eurotiomycetidae</taxon>
        <taxon>Onygenales</taxon>
        <taxon>Ajellomycetaceae</taxon>
        <taxon>Histoplasma</taxon>
    </lineage>
</organism>
<evidence type="ECO:0000250" key="1"/>
<evidence type="ECO:0000250" key="2">
    <source>
        <dbReference type="UniProtKB" id="Q16878"/>
    </source>
</evidence>
<evidence type="ECO:0000305" key="3"/>
<proteinExistence type="evidence at transcript level"/>
<feature type="chain" id="PRO_0000206614" description="Cysteine dioxygenase">
    <location>
        <begin position="1"/>
        <end position="213"/>
    </location>
</feature>
<feature type="binding site" evidence="2">
    <location>
        <position position="100"/>
    </location>
    <ligand>
        <name>Fe cation</name>
        <dbReference type="ChEBI" id="CHEBI:24875"/>
        <note>catalytic</note>
    </ligand>
</feature>
<feature type="binding site" evidence="2">
    <location>
        <position position="102"/>
    </location>
    <ligand>
        <name>Fe cation</name>
        <dbReference type="ChEBI" id="CHEBI:24875"/>
        <note>catalytic</note>
    </ligand>
</feature>
<feature type="binding site" evidence="2">
    <location>
        <position position="160"/>
    </location>
    <ligand>
        <name>Fe cation</name>
        <dbReference type="ChEBI" id="CHEBI:24875"/>
        <note>catalytic</note>
    </ligand>
</feature>
<feature type="cross-link" description="3'-(S-cysteinyl)-tyrosine (Cys-Tyr)" evidence="2">
    <location>
        <begin position="107"/>
        <end position="177"/>
    </location>
</feature>
<feature type="sequence conflict" description="In Ref. 1; AAV66535." evidence="3" ref="1">
    <original>K</original>
    <variation>E</variation>
    <location>
        <position position="146"/>
    </location>
</feature>
<comment type="catalytic activity">
    <reaction>
        <text>L-cysteine + O2 = 3-sulfino-L-alanine + H(+)</text>
        <dbReference type="Rhea" id="RHEA:20441"/>
        <dbReference type="ChEBI" id="CHEBI:15378"/>
        <dbReference type="ChEBI" id="CHEBI:15379"/>
        <dbReference type="ChEBI" id="CHEBI:35235"/>
        <dbReference type="ChEBI" id="CHEBI:61085"/>
        <dbReference type="EC" id="1.13.11.20"/>
    </reaction>
</comment>
<comment type="cofactor">
    <cofactor evidence="1">
        <name>Fe cation</name>
        <dbReference type="ChEBI" id="CHEBI:24875"/>
    </cofactor>
    <text evidence="1">Binds 1 Fe cation per subunit.</text>
</comment>
<comment type="PTM">
    <text evidence="2">The thioether cross-link between Cys-107 and Tyr-177 plays a structural role through stabilizing the Fe(2+) ion, and prevents the production of highly damaging free hydroxyl radicals by holding the oxygen radical via hydroxyl hydrogen.</text>
</comment>
<comment type="similarity">
    <text evidence="3">Belongs to the cysteine dioxygenase family.</text>
</comment>
<accession>Q5RLY7</accession>
<accession>C0NUD7</accession>
<dbReference type="EC" id="1.13.11.20"/>
<dbReference type="EMBL" id="AY804144">
    <property type="protein sequence ID" value="AAV66535.1"/>
    <property type="molecule type" value="mRNA"/>
</dbReference>
<dbReference type="EMBL" id="GG663372">
    <property type="protein sequence ID" value="EEH05017.1"/>
    <property type="molecule type" value="Genomic_DNA"/>
</dbReference>
<dbReference type="SMR" id="Q5RLY7"/>
<dbReference type="STRING" id="447093.Q5RLY7"/>
<dbReference type="VEuPathDB" id="FungiDB:I7I50_12171"/>
<dbReference type="HOGENOM" id="CLU_079443_4_2_1"/>
<dbReference type="InParanoid" id="Q5RLY7"/>
<dbReference type="Proteomes" id="UP000001631">
    <property type="component" value="Unassembled WGS sequence"/>
</dbReference>
<dbReference type="GO" id="GO:0017172">
    <property type="term" value="F:cysteine dioxygenase activity"/>
    <property type="evidence" value="ECO:0007669"/>
    <property type="project" value="UniProtKB-EC"/>
</dbReference>
<dbReference type="GO" id="GO:0008198">
    <property type="term" value="F:ferrous iron binding"/>
    <property type="evidence" value="ECO:0007669"/>
    <property type="project" value="TreeGrafter"/>
</dbReference>
<dbReference type="GO" id="GO:0019448">
    <property type="term" value="P:L-cysteine catabolic process"/>
    <property type="evidence" value="ECO:0007669"/>
    <property type="project" value="TreeGrafter"/>
</dbReference>
<dbReference type="CDD" id="cd10548">
    <property type="entry name" value="cupin_CDO"/>
    <property type="match status" value="1"/>
</dbReference>
<dbReference type="FunFam" id="2.60.120.10:FF:000189">
    <property type="entry name" value="Cysteine dioxygenase"/>
    <property type="match status" value="1"/>
</dbReference>
<dbReference type="Gene3D" id="2.60.120.10">
    <property type="entry name" value="Jelly Rolls"/>
    <property type="match status" value="1"/>
</dbReference>
<dbReference type="InterPro" id="IPR010300">
    <property type="entry name" value="CDO_1"/>
</dbReference>
<dbReference type="InterPro" id="IPR014710">
    <property type="entry name" value="RmlC-like_jellyroll"/>
</dbReference>
<dbReference type="InterPro" id="IPR011051">
    <property type="entry name" value="RmlC_Cupin_sf"/>
</dbReference>
<dbReference type="PANTHER" id="PTHR12918">
    <property type="entry name" value="CYSTEINE DIOXYGENASE"/>
    <property type="match status" value="1"/>
</dbReference>
<dbReference type="PANTHER" id="PTHR12918:SF1">
    <property type="entry name" value="CYSTEINE DIOXYGENASE TYPE 1"/>
    <property type="match status" value="1"/>
</dbReference>
<dbReference type="Pfam" id="PF05995">
    <property type="entry name" value="CDO_I"/>
    <property type="match status" value="1"/>
</dbReference>
<dbReference type="SUPFAM" id="SSF51182">
    <property type="entry name" value="RmlC-like cupins"/>
    <property type="match status" value="1"/>
</dbReference>
<gene>
    <name type="primary">CDO1</name>
    <name type="ORF">HCBG_06968</name>
</gene>
<keyword id="KW-0223">Dioxygenase</keyword>
<keyword id="KW-0408">Iron</keyword>
<keyword id="KW-0479">Metal-binding</keyword>
<keyword id="KW-0560">Oxidoreductase</keyword>
<keyword id="KW-1185">Reference proteome</keyword>
<keyword id="KW-0883">Thioether bond</keyword>
<name>CDO_AJECG</name>
<sequence>MPYLENSESSPDPTPLDAFHCLVQDINKVLGPSSGLDSDDVDPMDIQKLMEDYTSNESEWERYAFGDAGRAYTRNLVDEGNGKCNLLILVWSPGKGSAIHDHANAHCVMKVLKGSLRETLYGWPESDKVQKGEPSPLTVTRDKVYKEGQVTYMSDKLGLHKISNPDPTNFAISLHLYTPPNAAHYGFSLFDEKTGKSRHVKQSVLFSRKGHKL</sequence>
<protein>
    <recommendedName>
        <fullName>Cysteine dioxygenase</fullName>
        <shortName>CDO</shortName>
        <ecNumber>1.13.11.20</ecNumber>
    </recommendedName>
</protein>